<name>RDLB_STRCO</name>
<reference key="1">
    <citation type="journal article" date="2002" name="Mol. Microbiol.">
        <title>Two novel homologous proteins of Streptomyces coelicolor and Streptomyces lividans are involved in the formation of the rodlet layer and mediate attachment to a hydrophobic surface.</title>
        <authorList>
            <person name="Claessen D."/>
            <person name="Wosten H.A."/>
            <person name="van Keulen G."/>
            <person name="Faber O.G."/>
            <person name="Alves A.M."/>
            <person name="Meijer W.G."/>
            <person name="Dijkhuizen L."/>
        </authorList>
    </citation>
    <scope>NUCLEOTIDE SEQUENCE [GENOMIC DNA]</scope>
    <scope>PROTEIN SEQUENCE OF N-TERMINUS</scope>
    <scope>FUNCTION</scope>
    <scope>SUBCELLULAR LOCATION</scope>
    <scope>DEVELOPMENTAL STAGE</scope>
    <scope>INDUCTION</scope>
    <scope>DISRUPTION PHENOTYPE</scope>
    <source>
        <strain>ATCC BAA-471 / A3(2) / M145</strain>
    </source>
</reference>
<reference key="2">
    <citation type="journal article" date="2002" name="Nature">
        <title>Complete genome sequence of the model actinomycete Streptomyces coelicolor A3(2).</title>
        <authorList>
            <person name="Bentley S.D."/>
            <person name="Chater K.F."/>
            <person name="Cerdeno-Tarraga A.-M."/>
            <person name="Challis G.L."/>
            <person name="Thomson N.R."/>
            <person name="James K.D."/>
            <person name="Harris D.E."/>
            <person name="Quail M.A."/>
            <person name="Kieser H."/>
            <person name="Harper D."/>
            <person name="Bateman A."/>
            <person name="Brown S."/>
            <person name="Chandra G."/>
            <person name="Chen C.W."/>
            <person name="Collins M."/>
            <person name="Cronin A."/>
            <person name="Fraser A."/>
            <person name="Goble A."/>
            <person name="Hidalgo J."/>
            <person name="Hornsby T."/>
            <person name="Howarth S."/>
            <person name="Huang C.-H."/>
            <person name="Kieser T."/>
            <person name="Larke L."/>
            <person name="Murphy L.D."/>
            <person name="Oliver K."/>
            <person name="O'Neil S."/>
            <person name="Rabbinowitsch E."/>
            <person name="Rajandream M.A."/>
            <person name="Rutherford K.M."/>
            <person name="Rutter S."/>
            <person name="Seeger K."/>
            <person name="Saunders D."/>
            <person name="Sharp S."/>
            <person name="Squares R."/>
            <person name="Squares S."/>
            <person name="Taylor K."/>
            <person name="Warren T."/>
            <person name="Wietzorrek A."/>
            <person name="Woodward J.R."/>
            <person name="Barrell B.G."/>
            <person name="Parkhill J."/>
            <person name="Hopwood D.A."/>
        </authorList>
    </citation>
    <scope>NUCLEOTIDE SEQUENCE [LARGE SCALE GENOMIC DNA]</scope>
    <source>
        <strain>ATCC BAA-471 / A3(2) / M145</strain>
    </source>
</reference>
<reference key="3">
    <citation type="journal article" date="2003" name="Genes Dev.">
        <title>A novel class of secreted hydrophobic proteins is involved in aerial hyphae formation in Streptomyces coelicolor by forming amyloid-like fibrils.</title>
        <authorList>
            <person name="Claessen D."/>
            <person name="Rink R."/>
            <person name="de Jong W."/>
            <person name="Siebring J."/>
            <person name="de Vreugd P."/>
            <person name="Boersma F.G."/>
            <person name="Dijkhuizen L."/>
            <person name="Wosten H.A."/>
        </authorList>
    </citation>
    <scope>DISRUPTION PHENOTYPE</scope>
    <source>
        <strain>ATCC BAA-471 / A3(2) / M145</strain>
    </source>
</reference>
<reference key="4">
    <citation type="journal article" date="2004" name="Mol. Microbiol.">
        <title>The formation of the rodlet layer of streptomycetes is the result of the interplay between rodlins and chaplins.</title>
        <authorList>
            <person name="Claessen D."/>
            <person name="Stokroos I."/>
            <person name="Deelstra H.J."/>
            <person name="Penninga N.A."/>
            <person name="Bormann C."/>
            <person name="Salas J.A."/>
            <person name="Dijkhuizen L."/>
            <person name="Woesten H.A."/>
        </authorList>
    </citation>
    <scope>FUNCTION</scope>
    <scope>DISRUPTION PHENOTYPE</scope>
</reference>
<reference key="5">
    <citation type="journal article" date="2012" name="FEMS Microbiol. Lett.">
        <title>SapB and the rodlins are required for development of Streptomyces coelicolor in high osmolarity media.</title>
        <authorList>
            <person name="de Jong W."/>
            <person name="Vijgenboom E."/>
            <person name="Dijkhuizen L."/>
            <person name="Woesten H.A."/>
            <person name="Claessen D."/>
        </authorList>
    </citation>
    <scope>DISRUPTION PHENOTYPE</scope>
    <source>
        <strain>ATCC BAA-471 / A3(2) / M145</strain>
    </source>
</reference>
<reference key="6">
    <citation type="journal article" date="2017" name="Sci. Rep.">
        <title>The propensity of the bacterial rodlin protein RdlB to form amyloid fibrils determines its function in Streptomyces coelicolor.</title>
        <authorList>
            <person name="Yang W."/>
            <person name="Willemse J."/>
            <person name="Sawyer E.B."/>
            <person name="Lou F."/>
            <person name="Gong W."/>
            <person name="Zhang H."/>
            <person name="Gras S.L."/>
            <person name="Claessen D."/>
            <person name="Perrett S."/>
        </authorList>
    </citation>
    <scope>FUNCTION</scope>
    <scope>AMYLOID FORMATION</scope>
    <scope>SUBCELLULAR LOCATION</scope>
    <scope>DEVELOPMENTAL STAGE</scope>
    <scope>DOMAIN</scope>
    <scope>MUTAGENESIS OF 45-GLU--PRO-70 AND 45-GLU--ASN-68</scope>
</reference>
<organism>
    <name type="scientific">Streptomyces coelicolor (strain ATCC BAA-471 / A3(2) / M145)</name>
    <dbReference type="NCBI Taxonomy" id="100226"/>
    <lineage>
        <taxon>Bacteria</taxon>
        <taxon>Bacillati</taxon>
        <taxon>Actinomycetota</taxon>
        <taxon>Actinomycetes</taxon>
        <taxon>Kitasatosporales</taxon>
        <taxon>Streptomycetaceae</taxon>
        <taxon>Streptomyces</taxon>
        <taxon>Streptomyces albidoflavus group</taxon>
    </lineage>
</organism>
<accession>Q934F8</accession>
<accession>Q9L1J7</accession>
<sequence>MIKKVVAYAAIAASVMGASAAAAPQAMAIGDDSGPVSANGNGASQYFGNSMTTGNMSPQMALIQGSFNKPCIAVSDIPVSVIGLVPIQDLNVLGDDMNQQCAENSTQAKRDGALAHLLEDVSILSSNGEGGKG</sequence>
<gene>
    <name evidence="6" type="primary">rdlB</name>
    <name type="ordered locus">SCO2719</name>
</gene>
<keyword id="KW-0034">Amyloid</keyword>
<keyword id="KW-0130">Cell adhesion</keyword>
<keyword id="KW-0134">Cell wall</keyword>
<keyword id="KW-0903">Direct protein sequencing</keyword>
<keyword id="KW-1185">Reference proteome</keyword>
<keyword id="KW-0964">Secreted</keyword>
<keyword id="KW-0732">Signal</keyword>
<feature type="signal peptide" evidence="1">
    <location>
        <begin position="1"/>
        <end position="28"/>
    </location>
</feature>
<feature type="chain" id="PRO_5004319781" description="Rodlin protein RdlB">
    <location>
        <begin position="29"/>
        <end position="133"/>
    </location>
</feature>
<feature type="region of interest" description="Required for amyloid formation" evidence="5">
    <location>
        <begin position="45"/>
        <end position="70"/>
    </location>
</feature>
<feature type="region of interest" description="Amyloid-forming" evidence="5">
    <location>
        <begin position="45"/>
        <end position="57"/>
    </location>
</feature>
<feature type="region of interest" description="Amyloid-forming" evidence="5">
    <location>
        <begin position="59"/>
        <end position="70"/>
    </location>
</feature>
<feature type="mutagenesis site" description="No longer makes amyloid-like structures in vitro, does not complement an rdlB disruption." evidence="5">
    <location>
        <begin position="45"/>
        <end position="70"/>
    </location>
</feature>
<feature type="mutagenesis site" description="No longer makes amyloid-like structures in vitro, does not complement an rdlB disruption." evidence="5">
    <original>QYFGNSMTTGNMSPQMALIQGSFN</original>
    <variation>EYFGDSMTTGDMSPEMALIEGSFD</variation>
    <location>
        <begin position="45"/>
        <end position="68"/>
    </location>
</feature>
<feature type="sequence conflict" description="In Ref. 2; CAB75308." evidence="7" ref="2">
    <original>M</original>
    <variation>MSSGGRGFLRKDWPV</variation>
    <location>
        <position position="1"/>
    </location>
</feature>
<evidence type="ECO:0000269" key="1">
    <source>
    </source>
</evidence>
<evidence type="ECO:0000269" key="2">
    <source>
    </source>
</evidence>
<evidence type="ECO:0000269" key="3">
    <source>
    </source>
</evidence>
<evidence type="ECO:0000269" key="4">
    <source>
    </source>
</evidence>
<evidence type="ECO:0000269" key="5">
    <source>
    </source>
</evidence>
<evidence type="ECO:0000303" key="6">
    <source>
    </source>
</evidence>
<evidence type="ECO:0000305" key="7"/>
<evidence type="ECO:0000305" key="8">
    <source>
    </source>
</evidence>
<evidence type="ECO:0000305" key="9">
    <source>
    </source>
</evidence>
<evidence type="ECO:0000305" key="10">
    <source>
    </source>
</evidence>
<proteinExistence type="evidence at protein level"/>
<dbReference type="EMBL" id="AJ315951">
    <property type="protein sequence ID" value="CAC69980.1"/>
    <property type="molecule type" value="Genomic_DNA"/>
</dbReference>
<dbReference type="EMBL" id="AL939113">
    <property type="protein sequence ID" value="CAB75308.1"/>
    <property type="molecule type" value="Genomic_DNA"/>
</dbReference>
<dbReference type="RefSeq" id="NP_626952.1">
    <property type="nucleotide sequence ID" value="NC_003888.3"/>
</dbReference>
<dbReference type="RefSeq" id="WP_003976081.1">
    <property type="nucleotide sequence ID" value="NZ_VNID01000020.1"/>
</dbReference>
<dbReference type="STRING" id="100226.gene:17760326"/>
<dbReference type="PaxDb" id="100226-SCO2719"/>
<dbReference type="GeneID" id="91386280"/>
<dbReference type="KEGG" id="sco:SCO2719"/>
<dbReference type="PATRIC" id="fig|100226.15.peg.2774"/>
<dbReference type="eggNOG" id="ENOG5033VPI">
    <property type="taxonomic scope" value="Bacteria"/>
</dbReference>
<dbReference type="HOGENOM" id="CLU_1905512_0_0_11"/>
<dbReference type="InParanoid" id="Q934F8"/>
<dbReference type="OrthoDB" id="4328869at2"/>
<dbReference type="Proteomes" id="UP000001973">
    <property type="component" value="Chromosome"/>
</dbReference>
<dbReference type="GO" id="GO:0005576">
    <property type="term" value="C:extracellular region"/>
    <property type="evidence" value="ECO:0007669"/>
    <property type="project" value="UniProtKB-KW"/>
</dbReference>
<dbReference type="GO" id="GO:0031160">
    <property type="term" value="C:spore wall"/>
    <property type="evidence" value="ECO:0007669"/>
    <property type="project" value="UniProtKB-SubCell"/>
</dbReference>
<dbReference type="GO" id="GO:0007155">
    <property type="term" value="P:cell adhesion"/>
    <property type="evidence" value="ECO:0007669"/>
    <property type="project" value="UniProtKB-KW"/>
</dbReference>
<dbReference type="InterPro" id="IPR047736">
    <property type="entry name" value="RdlA/B-like"/>
</dbReference>
<dbReference type="NCBIfam" id="NF041022">
    <property type="entry name" value="rodlin_AB"/>
    <property type="match status" value="1"/>
</dbReference>
<comment type="function">
    <text evidence="1 3 5">Forms part of the rodlet layer on the spore surface; despite their high similarity both RdlA and RdlB are required for rodlet formation (PubMed:12067338, PubMed:15228525). Plays a role in cell adhesion to polystyrene plates (PubMed:12067338). Forms amyloid-like fibrils in vitro composed of stacked beta-sheets (PubMed:28211492).</text>
</comment>
<comment type="subcellular location">
    <subcellularLocation>
        <location evidence="1">Secreted</location>
        <location evidence="1">Cell wall</location>
    </subcellularLocation>
    <subcellularLocation>
        <location evidence="5 8 9">Spore wall</location>
    </subcellularLocation>
    <text evidence="1 10">Found on the surface of aerial hyphae and probably on the surface of the spore wall (PubMed:12067338). Rodlins probably contribute to the semi-transparent sheath-like structure which encapsulates spores, probably outside the chaplin layer (Probable).</text>
</comment>
<comment type="developmental stage">
    <text evidence="1 5">Present in aerial but not submerged hyphae, persists as hyphae differentiate and form spores; present at the outer surface of these structures (at protein level).</text>
</comment>
<comment type="induction">
    <text evidence="8">During aerial hyphae formation.</text>
</comment>
<comment type="domain">
    <text evidence="5">The mature protein has 2 regions in the N-terminus capable of forming amyloid rods of slightly differing conformation; intact protein makes longer fibrils. Amyloid formation depends on polar residues between amino acids 45 and 70.</text>
</comment>
<comment type="disruption phenotype">
    <text evidence="1 2 3 4">A single rdlB mutant does not form the rodlet layer on spores; disruption can be complemented by rdlB from S.tendae or S.griseus but not by any rdlA. Decreased levels of rdlA mRNA (PubMed:15228525). A double rdlA-rdlB deletion shows no effect on spore germination, growth rates, differentiation of aerial hyphae into spores or surface hydrophobicity on a number of media, but spore surface rodlets are missing and cells adhere less strongly to a polysytrene surface (PubMed:12067338). In the double rdlA-rdlB mutant chaplin proteins are still correctly localized to the cell wall of aerial hyphae (PubMed:12832396). In the double rdlA-rdlB mutant aerial hyphae development is strongly delayed under high osmolarity (10.3% sucrose or 0.5 M KCl) (PubMed:22309453).</text>
</comment>
<comment type="similarity">
    <text evidence="7">Belongs to the rodlin family.</text>
</comment>
<protein>
    <recommendedName>
        <fullName evidence="6">Rodlin protein RdlB</fullName>
    </recommendedName>
</protein>